<accession>F0ZBA6</accession>
<dbReference type="EMBL" id="GL870969">
    <property type="protein sequence ID" value="EGC38810.1"/>
    <property type="molecule type" value="Genomic_DNA"/>
</dbReference>
<dbReference type="RefSeq" id="XP_003284704.1">
    <property type="nucleotide sequence ID" value="XM_003284656.1"/>
</dbReference>
<dbReference type="PDB" id="4R12">
    <property type="method" value="X-ray"/>
    <property type="resolution" value="1.95 A"/>
    <property type="chains" value="A=19-611"/>
</dbReference>
<dbReference type="PDBsum" id="4R12"/>
<dbReference type="SMR" id="F0ZBA6"/>
<dbReference type="FunCoup" id="F0ZBA6">
    <property type="interactions" value="358"/>
</dbReference>
<dbReference type="STRING" id="5786.F0ZBA6"/>
<dbReference type="GlyCosmos" id="F0ZBA6">
    <property type="glycosylation" value="5 sites, No reported glycans"/>
</dbReference>
<dbReference type="iPTMnet" id="F0ZBA6"/>
<dbReference type="EnsemblProtists" id="EGC38810">
    <property type="protein sequence ID" value="EGC38810"/>
    <property type="gene ID" value="DICPUDRAFT_96800"/>
</dbReference>
<dbReference type="GeneID" id="10506558"/>
<dbReference type="KEGG" id="dpp:DICPUDRAFT_96800"/>
<dbReference type="VEuPathDB" id="AmoebaDB:DICPUDRAFT_96800"/>
<dbReference type="eggNOG" id="KOG2657">
    <property type="taxonomic scope" value="Eukaryota"/>
</dbReference>
<dbReference type="InParanoid" id="F0ZBA6"/>
<dbReference type="OMA" id="ECVYPGV"/>
<dbReference type="OrthoDB" id="10265862at2759"/>
<dbReference type="EvolutionaryTrace" id="F0ZBA6"/>
<dbReference type="Proteomes" id="UP000001064">
    <property type="component" value="Unassembled WGS sequence"/>
</dbReference>
<dbReference type="GO" id="GO:0005783">
    <property type="term" value="C:endoplasmic reticulum"/>
    <property type="evidence" value="ECO:0007669"/>
    <property type="project" value="EnsemblProtists"/>
</dbReference>
<dbReference type="GO" id="GO:0070765">
    <property type="term" value="C:gamma-secretase complex"/>
    <property type="evidence" value="ECO:0007669"/>
    <property type="project" value="EnsemblProtists"/>
</dbReference>
<dbReference type="GO" id="GO:0005886">
    <property type="term" value="C:plasma membrane"/>
    <property type="evidence" value="ECO:0000318"/>
    <property type="project" value="GO_Central"/>
</dbReference>
<dbReference type="GO" id="GO:0006914">
    <property type="term" value="P:autophagy"/>
    <property type="evidence" value="ECO:0007669"/>
    <property type="project" value="EnsemblProtists"/>
</dbReference>
<dbReference type="GO" id="GO:0044351">
    <property type="term" value="P:macropinocytosis"/>
    <property type="evidence" value="ECO:0007669"/>
    <property type="project" value="EnsemblProtists"/>
</dbReference>
<dbReference type="GO" id="GO:0007219">
    <property type="term" value="P:Notch signaling pathway"/>
    <property type="evidence" value="ECO:0007669"/>
    <property type="project" value="UniProtKB-KW"/>
</dbReference>
<dbReference type="GO" id="GO:0006909">
    <property type="term" value="P:phagocytosis"/>
    <property type="evidence" value="ECO:0007669"/>
    <property type="project" value="EnsemblProtists"/>
</dbReference>
<dbReference type="GO" id="GO:0016485">
    <property type="term" value="P:protein processing"/>
    <property type="evidence" value="ECO:0000318"/>
    <property type="project" value="GO_Central"/>
</dbReference>
<dbReference type="GO" id="GO:0044671">
    <property type="term" value="P:sorocarp spore cell differentiation"/>
    <property type="evidence" value="ECO:0007669"/>
    <property type="project" value="EnsemblProtists"/>
</dbReference>
<dbReference type="CDD" id="cd03881">
    <property type="entry name" value="M28_Nicastrin"/>
    <property type="match status" value="1"/>
</dbReference>
<dbReference type="DisProt" id="DP02165"/>
<dbReference type="FunFam" id="3.40.630.10:FF:000185">
    <property type="entry name" value="Nicastrin"/>
    <property type="match status" value="1"/>
</dbReference>
<dbReference type="Gene3D" id="3.40.630.10">
    <property type="entry name" value="Zn peptidases"/>
    <property type="match status" value="1"/>
</dbReference>
<dbReference type="InterPro" id="IPR041084">
    <property type="entry name" value="Ncstrn_small"/>
</dbReference>
<dbReference type="InterPro" id="IPR008710">
    <property type="entry name" value="Nicastrin"/>
</dbReference>
<dbReference type="PANTHER" id="PTHR21092">
    <property type="entry name" value="NICASTRIN"/>
    <property type="match status" value="1"/>
</dbReference>
<dbReference type="PANTHER" id="PTHR21092:SF0">
    <property type="entry name" value="NICASTRIN"/>
    <property type="match status" value="1"/>
</dbReference>
<dbReference type="Pfam" id="PF18266">
    <property type="entry name" value="Ncstrn_small"/>
    <property type="match status" value="1"/>
</dbReference>
<dbReference type="Pfam" id="PF05450">
    <property type="entry name" value="Nicastrin"/>
    <property type="match status" value="1"/>
</dbReference>
<dbReference type="SUPFAM" id="SSF53187">
    <property type="entry name" value="Zn-dependent exopeptidases"/>
    <property type="match status" value="1"/>
</dbReference>
<protein>
    <recommendedName>
        <fullName evidence="5">Nicastrin</fullName>
        <shortName evidence="5">DpNCT</shortName>
    </recommendedName>
</protein>
<organism evidence="8">
    <name type="scientific">Dictyostelium purpureum</name>
    <name type="common">Slime mold</name>
    <dbReference type="NCBI Taxonomy" id="5786"/>
    <lineage>
        <taxon>Eukaryota</taxon>
        <taxon>Amoebozoa</taxon>
        <taxon>Evosea</taxon>
        <taxon>Eumycetozoa</taxon>
        <taxon>Dictyostelia</taxon>
        <taxon>Dictyosteliales</taxon>
        <taxon>Dictyosteliaceae</taxon>
        <taxon>Dictyostelium</taxon>
    </lineage>
</organism>
<sequence length="643" mass="72508">MRFKNVLVLLLLLVFSVINSEPSAPATISDNIYTTLYSSYPCTKIMTSDGQFGCSSKHGGNSGILYLIDDDESYNNYFSYSQQKDIIVVLDTNYFNSTSVLNLHNKSKIEGIIVLTDTKKTYPYSPDSRYPNKIYGLYPNSNLEWNPNADGFTYFSFPFPIFAIDNQTSVAIRNVSKHNRDGQYPAWGAELDSFMQGAINSETCLRRGFCEPVGGQSIWSSFSSKIDKEKEIILVMLPFDTTAFFRDLSIGADQSSFATVTLLSVIKSLAAVDRSSWNKEVVFAFWNAERWGYVGSEYFINDLLNFQCKTYNSDKSKCIDPPRADLAFQTQINFTKISTIIELNQIGRAQLDKNLGKYSLYLHTAGTKTSSVTDILDQVASSYENSTITFKPTTQTELPPSSSMSFLKKTNKIPVVVITDHDYKYSNPYYGYEQDDNENVLGSTLNDIVYILSTFIDRIAGGNNNITIDKNFINILYPCFTSSITCFNILMKTYPLNEVPNFYSSVFGTSLTTTLSPYETKLIHRLLYSITQYNSTLTNCTSDNDCPSSLCYSGQCVSSNTHLHNALSLGFDFDTSKNVWKIVNSSYPIFTESNWDYTALKVFKIGNSTTEIWFLVSGLIELLVSIGLILYVKKFLSNRYKLL</sequence>
<gene>
    <name evidence="1" type="primary">ncstn</name>
    <name evidence="7" type="ORF">DICPUDRAFT_96800</name>
</gene>
<evidence type="ECO:0000250" key="1">
    <source>
        <dbReference type="UniProtKB" id="Q54JT7"/>
    </source>
</evidence>
<evidence type="ECO:0000250" key="2">
    <source>
        <dbReference type="UniProtKB" id="Q92542"/>
    </source>
</evidence>
<evidence type="ECO:0000255" key="3"/>
<evidence type="ECO:0000269" key="4">
    <source>
    </source>
</evidence>
<evidence type="ECO:0000303" key="5">
    <source>
    </source>
</evidence>
<evidence type="ECO:0000305" key="6"/>
<evidence type="ECO:0000312" key="7">
    <source>
        <dbReference type="EMBL" id="EGC38810.1"/>
    </source>
</evidence>
<evidence type="ECO:0000312" key="8">
    <source>
        <dbReference type="Proteomes" id="UP000001064"/>
    </source>
</evidence>
<evidence type="ECO:0007744" key="9">
    <source>
        <dbReference type="PDB" id="4R12"/>
    </source>
</evidence>
<evidence type="ECO:0007829" key="10">
    <source>
        <dbReference type="PDB" id="4R12"/>
    </source>
</evidence>
<reference evidence="8" key="1">
    <citation type="journal article" date="2011" name="Genome Biol.">
        <title>Comparative genomics of the social amoebae Dictyostelium discoideum and Dictyostelium purpureum.</title>
        <authorList>
            <consortium name="US DOE Joint Genome Institute (JGI-PGF)"/>
            <person name="Sucgang R."/>
            <person name="Kuo A."/>
            <person name="Tian X."/>
            <person name="Salerno W."/>
            <person name="Parikh A."/>
            <person name="Feasley C.L."/>
            <person name="Dalin E."/>
            <person name="Tu H."/>
            <person name="Huang E."/>
            <person name="Barry K."/>
            <person name="Lindquist E."/>
            <person name="Shapiro H."/>
            <person name="Bruce D."/>
            <person name="Schmutz J."/>
            <person name="Salamov A."/>
            <person name="Fey P."/>
            <person name="Gaudet P."/>
            <person name="Anjard C."/>
            <person name="Babu M.M."/>
            <person name="Basu S."/>
            <person name="Bushmanova Y."/>
            <person name="van der Wel H."/>
            <person name="Katoh-Kurasawa M."/>
            <person name="Dinh C."/>
            <person name="Coutinho P.M."/>
            <person name="Saito T."/>
            <person name="Elias M."/>
            <person name="Schaap P."/>
            <person name="Kay R.R."/>
            <person name="Henrissat B."/>
            <person name="Eichinger L."/>
            <person name="Rivero F."/>
            <person name="Putnam N.H."/>
            <person name="West C.M."/>
            <person name="Loomis W.F."/>
            <person name="Chisholm R.L."/>
            <person name="Shaulsky G."/>
            <person name="Strassmann J.E."/>
            <person name="Queller D.C."/>
            <person name="Kuspa A."/>
            <person name="Grigoriev I.V."/>
        </authorList>
    </citation>
    <scope>NUCLEOTIDE SEQUENCE [LARGE SCALE GENOMIC DNA]</scope>
    <source>
        <strain evidence="8">QSDP1</strain>
    </source>
</reference>
<reference evidence="9" key="2">
    <citation type="journal article" date="2014" name="Proc. Natl. Acad. Sci. U.S.A.">
        <title>Crystal structure of the gamma-secretase component nicastrin.</title>
        <authorList>
            <person name="Xie T."/>
            <person name="Yan C."/>
            <person name="Zhou R."/>
            <person name="Zhao Y."/>
            <person name="Sun L."/>
            <person name="Yang G."/>
            <person name="Lu P."/>
            <person name="Ma D."/>
            <person name="Shi Y."/>
        </authorList>
    </citation>
    <scope>X-RAY CRYSTALLOGRAPHY (1.95 ANGSTROMS) OF 19-611</scope>
    <scope>DISULFIDE BONDS</scope>
    <scope>GLYCOSYLATION AT ASN-96; ASN-166; ASN-333; ASN-385 AND ASN-584</scope>
</reference>
<name>NICA_DICPU</name>
<comment type="function">
    <text evidence="2">Essential subunit of the gamma-secretase complex, an endoprotease complex that catalyzes the intramembrane cleavage of integral membrane proteins such as Notch receptors and APP (amyloid-beta precursor protein).</text>
</comment>
<comment type="subunit">
    <text evidence="2">Component of the gamma-secretase complex, a complex composed of a presenilin homodimer, nicastrin, aph1 and pen2.</text>
</comment>
<comment type="subcellular location">
    <subcellularLocation>
        <location evidence="3">Membrane</location>
        <topology evidence="3">Single-pass type I membrane protein</topology>
    </subcellularLocation>
</comment>
<comment type="similarity">
    <text evidence="6">Belongs to the nicastrin family.</text>
</comment>
<proteinExistence type="evidence at protein level"/>
<keyword id="KW-0002">3D-structure</keyword>
<keyword id="KW-1015">Disulfide bond</keyword>
<keyword id="KW-0325">Glycoprotein</keyword>
<keyword id="KW-0472">Membrane</keyword>
<keyword id="KW-0914">Notch signaling pathway</keyword>
<keyword id="KW-1185">Reference proteome</keyword>
<keyword id="KW-0732">Signal</keyword>
<keyword id="KW-0812">Transmembrane</keyword>
<keyword id="KW-1133">Transmembrane helix</keyword>
<feature type="signal peptide" evidence="3">
    <location>
        <begin position="1"/>
        <end position="20"/>
    </location>
</feature>
<feature type="chain" id="PRO_5003262286" description="Nicastrin" evidence="3">
    <location>
        <begin position="21"/>
        <end position="643"/>
    </location>
</feature>
<feature type="topological domain" description="Extracellular" evidence="6">
    <location>
        <begin position="21"/>
        <end position="611"/>
    </location>
</feature>
<feature type="transmembrane region" description="Helical" evidence="3">
    <location>
        <begin position="612"/>
        <end position="632"/>
    </location>
</feature>
<feature type="topological domain" description="Cytoplasmic" evidence="6">
    <location>
        <begin position="633"/>
        <end position="643"/>
    </location>
</feature>
<feature type="glycosylation site" description="N-linked (GlcNAc...) asparagine" evidence="4 9">
    <location>
        <position position="96"/>
    </location>
</feature>
<feature type="glycosylation site" description="N-linked (GlcNAc...) asparagine" evidence="4 9">
    <location>
        <position position="166"/>
    </location>
</feature>
<feature type="glycosylation site" description="N-linked (GlcNAc...) asparagine" evidence="4 9">
    <location>
        <position position="333"/>
    </location>
</feature>
<feature type="glycosylation site" description="N-linked (GlcNAc...) asparagine" evidence="4 9">
    <location>
        <position position="385"/>
    </location>
</feature>
<feature type="glycosylation site" description="N-linked (GlcNAc...) asparagine" evidence="4 9">
    <location>
        <position position="584"/>
    </location>
</feature>
<feature type="disulfide bond" evidence="4 9">
    <location>
        <begin position="42"/>
        <end position="54"/>
    </location>
</feature>
<feature type="disulfide bond" evidence="4 9">
    <location>
        <begin position="204"/>
        <end position="210"/>
    </location>
</feature>
<feature type="disulfide bond" evidence="4 9">
    <location>
        <begin position="308"/>
        <end position="318"/>
    </location>
</feature>
<feature type="disulfide bond" evidence="4 9">
    <location>
        <begin position="479"/>
        <end position="486"/>
    </location>
</feature>
<feature type="disulfide bond" evidence="4 9">
    <location>
        <begin position="540"/>
        <end position="551"/>
    </location>
</feature>
<feature type="disulfide bond" evidence="4 9">
    <location>
        <begin position="546"/>
        <end position="556"/>
    </location>
</feature>
<feature type="strand" evidence="10">
    <location>
        <begin position="38"/>
        <end position="41"/>
    </location>
</feature>
<feature type="strand" evidence="10">
    <location>
        <begin position="44"/>
        <end position="49"/>
    </location>
</feature>
<feature type="strand" evidence="10">
    <location>
        <begin position="51"/>
        <end position="54"/>
    </location>
</feature>
<feature type="strand" evidence="10">
    <location>
        <begin position="61"/>
        <end position="68"/>
    </location>
</feature>
<feature type="helix" evidence="10">
    <location>
        <begin position="71"/>
        <end position="75"/>
    </location>
</feature>
<feature type="turn" evidence="10">
    <location>
        <begin position="76"/>
        <end position="79"/>
    </location>
</feature>
<feature type="strand" evidence="10">
    <location>
        <begin position="84"/>
        <end position="90"/>
    </location>
</feature>
<feature type="helix" evidence="10">
    <location>
        <begin position="92"/>
        <end position="94"/>
    </location>
</feature>
<feature type="helix" evidence="10">
    <location>
        <begin position="97"/>
        <end position="101"/>
    </location>
</feature>
<feature type="strand" evidence="10">
    <location>
        <begin position="106"/>
        <end position="114"/>
    </location>
</feature>
<feature type="helix" evidence="10">
    <location>
        <begin position="133"/>
        <end position="135"/>
    </location>
</feature>
<feature type="helix" evidence="10">
    <location>
        <begin position="152"/>
        <end position="154"/>
    </location>
</feature>
<feature type="strand" evidence="10">
    <location>
        <begin position="155"/>
        <end position="159"/>
    </location>
</feature>
<feature type="strand" evidence="10">
    <location>
        <begin position="161"/>
        <end position="164"/>
    </location>
</feature>
<feature type="helix" evidence="10">
    <location>
        <begin position="166"/>
        <end position="178"/>
    </location>
</feature>
<feature type="strand" evidence="10">
    <location>
        <begin position="187"/>
        <end position="192"/>
    </location>
</feature>
<feature type="helix" evidence="10">
    <location>
        <begin position="201"/>
        <end position="207"/>
    </location>
</feature>
<feature type="strand" evidence="10">
    <location>
        <begin position="210"/>
        <end position="213"/>
    </location>
</feature>
<feature type="strand" evidence="10">
    <location>
        <begin position="215"/>
        <end position="225"/>
    </location>
</feature>
<feature type="strand" evidence="10">
    <location>
        <begin position="232"/>
        <end position="238"/>
    </location>
</feature>
<feature type="helix" evidence="10">
    <location>
        <begin position="246"/>
        <end position="248"/>
    </location>
</feature>
<feature type="turn" evidence="10">
    <location>
        <begin position="252"/>
        <end position="255"/>
    </location>
</feature>
<feature type="helix" evidence="10">
    <location>
        <begin position="256"/>
        <end position="270"/>
    </location>
</feature>
<feature type="helix" evidence="10">
    <location>
        <begin position="274"/>
        <end position="276"/>
    </location>
</feature>
<feature type="strand" evidence="10">
    <location>
        <begin position="279"/>
        <end position="288"/>
    </location>
</feature>
<feature type="helix" evidence="10">
    <location>
        <begin position="289"/>
        <end position="291"/>
    </location>
</feature>
<feature type="helix" evidence="10">
    <location>
        <begin position="294"/>
        <end position="305"/>
    </location>
</feature>
<feature type="strand" evidence="10">
    <location>
        <begin position="309"/>
        <end position="311"/>
    </location>
</feature>
<feature type="strand" evidence="10">
    <location>
        <begin position="315"/>
        <end position="320"/>
    </location>
</feature>
<feature type="helix" evidence="10">
    <location>
        <begin position="327"/>
        <end position="331"/>
    </location>
</feature>
<feature type="helix" evidence="10">
    <location>
        <begin position="334"/>
        <end position="336"/>
    </location>
</feature>
<feature type="strand" evidence="10">
    <location>
        <begin position="337"/>
        <end position="343"/>
    </location>
</feature>
<feature type="strand" evidence="10">
    <location>
        <begin position="350"/>
        <end position="352"/>
    </location>
</feature>
<feature type="turn" evidence="10">
    <location>
        <begin position="353"/>
        <end position="356"/>
    </location>
</feature>
<feature type="strand" evidence="10">
    <location>
        <begin position="357"/>
        <end position="368"/>
    </location>
</feature>
<feature type="helix" evidence="10">
    <location>
        <begin position="370"/>
        <end position="380"/>
    </location>
</feature>
<feature type="strand" evidence="10">
    <location>
        <begin position="388"/>
        <end position="392"/>
    </location>
</feature>
<feature type="helix" evidence="10">
    <location>
        <begin position="403"/>
        <end position="407"/>
    </location>
</feature>
<feature type="strand" evidence="10">
    <location>
        <begin position="415"/>
        <end position="420"/>
    </location>
</feature>
<feature type="strand" evidence="10">
    <location>
        <begin position="422"/>
        <end position="424"/>
    </location>
</feature>
<feature type="turn" evidence="10">
    <location>
        <begin position="428"/>
        <end position="431"/>
    </location>
</feature>
<feature type="helix" evidence="10">
    <location>
        <begin position="437"/>
        <end position="439"/>
    </location>
</feature>
<feature type="helix" evidence="10">
    <location>
        <begin position="442"/>
        <end position="444"/>
    </location>
</feature>
<feature type="helix" evidence="10">
    <location>
        <begin position="445"/>
        <end position="459"/>
    </location>
</feature>
<feature type="helix" evidence="10">
    <location>
        <begin position="470"/>
        <end position="481"/>
    </location>
</feature>
<feature type="helix" evidence="10">
    <location>
        <begin position="488"/>
        <end position="490"/>
    </location>
</feature>
<feature type="strand" evidence="10">
    <location>
        <begin position="508"/>
        <end position="510"/>
    </location>
</feature>
<feature type="helix" evidence="10">
    <location>
        <begin position="518"/>
        <end position="530"/>
    </location>
</feature>
<feature type="strand" evidence="10">
    <location>
        <begin position="533"/>
        <end position="537"/>
    </location>
</feature>
<feature type="helix" evidence="10">
    <location>
        <begin position="543"/>
        <end position="545"/>
    </location>
</feature>
<feature type="strand" evidence="10">
    <location>
        <begin position="549"/>
        <end position="552"/>
    </location>
</feature>
<feature type="strand" evidence="10">
    <location>
        <begin position="555"/>
        <end position="558"/>
    </location>
</feature>
<feature type="strand" evidence="10">
    <location>
        <begin position="560"/>
        <end position="566"/>
    </location>
</feature>
<feature type="strand" evidence="10">
    <location>
        <begin position="571"/>
        <end position="574"/>
    </location>
</feature>
<feature type="turn" evidence="10">
    <location>
        <begin position="575"/>
        <end position="578"/>
    </location>
</feature>
<feature type="strand" evidence="10">
    <location>
        <begin position="579"/>
        <end position="583"/>
    </location>
</feature>
<feature type="strand" evidence="10">
    <location>
        <begin position="590"/>
        <end position="593"/>
    </location>
</feature>
<feature type="strand" evidence="10">
    <location>
        <begin position="599"/>
        <end position="604"/>
    </location>
</feature>